<gene>
    <name type="primary">Ywhah</name>
</gene>
<sequence length="246" mass="28212">MGDREQLLQRARLAEQAERYDDMASAMKAVTELNEPLSNEDRNLLSVAYKNVVGARRSSWRVISSIEQKTMADGNEKKLEKVKAYREKIEKELETVCNDVLALLDKFLIKNCNDFQYESKVFYLKMKGDYYRYLAEVASGEKKNSVVEASEAAYKEAFEISKEHMQPTHPIRLGLALNFSVFYYEIQNAPEQACLLAKQAFDDAIAELDTLNEDSYKDSTLIMQLLRDNLTLWTSDQQDEEAGEGN</sequence>
<keyword id="KW-0007">Acetylation</keyword>
<keyword id="KW-0963">Cytoplasm</keyword>
<keyword id="KW-0903">Direct protein sequencing</keyword>
<keyword id="KW-0597">Phosphoprotein</keyword>
<keyword id="KW-1185">Reference proteome</keyword>
<name>1433F_RAT</name>
<comment type="function">
    <text evidence="1">Adapter protein implicated in the regulation of a large spectrum of both general and specialized signaling pathways. Binds to a large number of partners, usually by recognition of a phosphoserine or phosphothreonine motif. Binding generally results in the modulation of the activity of the binding partner. Negatively regulates the kinase activity of PDPK1 (By similarity).</text>
</comment>
<comment type="subunit">
    <text evidence="1 2 3">Homodimer (By similarity). Interacts with many nuclear hormone receptors and cofactors including AR, ESR1, ESR2, MC2R, NR3C1, NRIP1, PPARBP and THRA. Interacts with ABL1 (phosphorylated form); the interaction retains it in the cytoplasm. Weakly interacts with CDKN1B. Interacts with ARHGEF28 and CDK16. Interacts with GAB2 (By similarity). Interacts with KCNK18 in a phosphorylation-dependent manner. Interacts with SAMSN1 (By similarity). Interacts with the 'Ser-241' phosphorylated form of PDPK1 (By similarity). Interacts with the 'Thr-369' phosphorylated form of DAPK2 (By similarity). Interacts with PI4KB, TBC1D22A and TBC1D22B (By similarity). Interacts with SLITRK1 (By similarity). Interacts with MEFV (By similarity).</text>
</comment>
<comment type="interaction">
    <interactant intactId="EBI-444647">
        <id>P68511</id>
    </interactant>
    <interactant intactId="EBI-7007865">
        <id>Q3MUI1</id>
        <label>Numb</label>
    </interactant>
    <organismsDiffer>false</organismsDiffer>
    <experiments>3</experiments>
</comment>
<comment type="subcellular location">
    <subcellularLocation>
        <location>Cytoplasm</location>
    </subcellularLocation>
</comment>
<comment type="PTM">
    <text evidence="1">Phosphorylated on Ser-59 by protein kinase C delta type catalytic subunit in a sphingosine-dependent fashion.</text>
</comment>
<comment type="similarity">
    <text evidence="4">Belongs to the 14-3-3 family.</text>
</comment>
<proteinExistence type="evidence at protein level"/>
<organism>
    <name type="scientific">Rattus norvegicus</name>
    <name type="common">Rat</name>
    <dbReference type="NCBI Taxonomy" id="10116"/>
    <lineage>
        <taxon>Eukaryota</taxon>
        <taxon>Metazoa</taxon>
        <taxon>Chordata</taxon>
        <taxon>Craniata</taxon>
        <taxon>Vertebrata</taxon>
        <taxon>Euteleostomi</taxon>
        <taxon>Mammalia</taxon>
        <taxon>Eutheria</taxon>
        <taxon>Euarchontoglires</taxon>
        <taxon>Glires</taxon>
        <taxon>Rodentia</taxon>
        <taxon>Myomorpha</taxon>
        <taxon>Muroidea</taxon>
        <taxon>Muridae</taxon>
        <taxon>Murinae</taxon>
        <taxon>Rattus</taxon>
    </lineage>
</organism>
<dbReference type="EMBL" id="D17445">
    <property type="protein sequence ID" value="BAA04259.1"/>
    <property type="molecule type" value="mRNA"/>
</dbReference>
<dbReference type="EMBL" id="BC081825">
    <property type="protein sequence ID" value="AAH81825.1"/>
    <property type="molecule type" value="mRNA"/>
</dbReference>
<dbReference type="PIR" id="A60031">
    <property type="entry name" value="A60031"/>
</dbReference>
<dbReference type="RefSeq" id="NP_037184.1">
    <property type="nucleotide sequence ID" value="NM_013052.2"/>
</dbReference>
<dbReference type="SMR" id="P68511"/>
<dbReference type="BioGRID" id="247607">
    <property type="interactions" value="6"/>
</dbReference>
<dbReference type="DIP" id="DIP-299N"/>
<dbReference type="FunCoup" id="P68511">
    <property type="interactions" value="1590"/>
</dbReference>
<dbReference type="IntAct" id="P68511">
    <property type="interactions" value="8"/>
</dbReference>
<dbReference type="MINT" id="P68511"/>
<dbReference type="STRING" id="10116.ENSRNOP00000072179"/>
<dbReference type="GlyGen" id="P68511">
    <property type="glycosylation" value="1 site, 1 O-linked glycan (1 site)"/>
</dbReference>
<dbReference type="iPTMnet" id="P68511"/>
<dbReference type="PhosphoSitePlus" id="P68511"/>
<dbReference type="jPOST" id="P68511"/>
<dbReference type="PaxDb" id="10116-ENSRNOP00000024388"/>
<dbReference type="Ensembl" id="ENSRNOT00000085735.2">
    <property type="protein sequence ID" value="ENSRNOP00000075701.1"/>
    <property type="gene ID" value="ENSRNOG00000055471.2"/>
</dbReference>
<dbReference type="GeneID" id="25576"/>
<dbReference type="KEGG" id="rno:25576"/>
<dbReference type="UCSC" id="RGD:3978">
    <property type="organism name" value="rat"/>
</dbReference>
<dbReference type="AGR" id="RGD:3978"/>
<dbReference type="CTD" id="7533"/>
<dbReference type="RGD" id="3978">
    <property type="gene designation" value="Ywhah"/>
</dbReference>
<dbReference type="eggNOG" id="KOG0841">
    <property type="taxonomic scope" value="Eukaryota"/>
</dbReference>
<dbReference type="GeneTree" id="ENSGT01090000260040"/>
<dbReference type="HOGENOM" id="CLU_058290_0_0_1"/>
<dbReference type="InParanoid" id="P68511"/>
<dbReference type="OrthoDB" id="21284at9989"/>
<dbReference type="PhylomeDB" id="P68511"/>
<dbReference type="TreeFam" id="TF102003"/>
<dbReference type="Reactome" id="R-RNO-111447">
    <property type="pathway name" value="Activation of BAD and translocation to mitochondria"/>
</dbReference>
<dbReference type="Reactome" id="R-RNO-5625740">
    <property type="pathway name" value="RHO GTPases activate PKNs"/>
</dbReference>
<dbReference type="Reactome" id="R-RNO-5628897">
    <property type="pathway name" value="TP53 Regulates Metabolic Genes"/>
</dbReference>
<dbReference type="Reactome" id="R-RNO-75035">
    <property type="pathway name" value="Chk1/Chk2(Cds1) mediated inactivation of Cyclin B:Cdk1 complex"/>
</dbReference>
<dbReference type="PRO" id="PR:P68511"/>
<dbReference type="Proteomes" id="UP000002494">
    <property type="component" value="Chromosome 14"/>
</dbReference>
<dbReference type="Bgee" id="ENSRNOG00000055471">
    <property type="expression patterns" value="Expressed in cerebellum and 20 other cell types or tissues"/>
</dbReference>
<dbReference type="ExpressionAtlas" id="P68511">
    <property type="expression patterns" value="baseline and differential"/>
</dbReference>
<dbReference type="GO" id="GO:0150048">
    <property type="term" value="C:cerebellar granule cell to Purkinje cell synapse"/>
    <property type="evidence" value="ECO:0000266"/>
    <property type="project" value="RGD"/>
</dbReference>
<dbReference type="GO" id="GO:0005737">
    <property type="term" value="C:cytoplasm"/>
    <property type="evidence" value="ECO:0000266"/>
    <property type="project" value="RGD"/>
</dbReference>
<dbReference type="GO" id="GO:0098978">
    <property type="term" value="C:glutamatergic synapse"/>
    <property type="evidence" value="ECO:0000266"/>
    <property type="project" value="RGD"/>
</dbReference>
<dbReference type="GO" id="GO:0005739">
    <property type="term" value="C:mitochondrion"/>
    <property type="evidence" value="ECO:0000266"/>
    <property type="project" value="RGD"/>
</dbReference>
<dbReference type="GO" id="GO:0005886">
    <property type="term" value="C:plasma membrane"/>
    <property type="evidence" value="ECO:0000266"/>
    <property type="project" value="RGD"/>
</dbReference>
<dbReference type="GO" id="GO:0098793">
    <property type="term" value="C:presynapse"/>
    <property type="evidence" value="ECO:0000266"/>
    <property type="project" value="RGD"/>
</dbReference>
<dbReference type="GO" id="GO:0045202">
    <property type="term" value="C:synapse"/>
    <property type="evidence" value="ECO:0000314"/>
    <property type="project" value="SynGO"/>
</dbReference>
<dbReference type="GO" id="GO:0003779">
    <property type="term" value="F:actin binding"/>
    <property type="evidence" value="ECO:0000266"/>
    <property type="project" value="RGD"/>
</dbReference>
<dbReference type="GO" id="GO:0019899">
    <property type="term" value="F:enzyme binding"/>
    <property type="evidence" value="ECO:0000266"/>
    <property type="project" value="RGD"/>
</dbReference>
<dbReference type="GO" id="GO:0042802">
    <property type="term" value="F:identical protein binding"/>
    <property type="evidence" value="ECO:0000266"/>
    <property type="project" value="RGD"/>
</dbReference>
<dbReference type="GO" id="GO:0035259">
    <property type="term" value="F:nuclear glucocorticoid receptor binding"/>
    <property type="evidence" value="ECO:0000266"/>
    <property type="project" value="RGD"/>
</dbReference>
<dbReference type="GO" id="GO:0019904">
    <property type="term" value="F:protein domain specific binding"/>
    <property type="evidence" value="ECO:0000266"/>
    <property type="project" value="RGD"/>
</dbReference>
<dbReference type="GO" id="GO:0046982">
    <property type="term" value="F:protein heterodimerization activity"/>
    <property type="evidence" value="ECO:0000266"/>
    <property type="project" value="RGD"/>
</dbReference>
<dbReference type="GO" id="GO:0017080">
    <property type="term" value="F:sodium channel regulator activity"/>
    <property type="evidence" value="ECO:0000250"/>
    <property type="project" value="BHF-UCL"/>
</dbReference>
<dbReference type="GO" id="GO:0044325">
    <property type="term" value="F:transmembrane transporter binding"/>
    <property type="evidence" value="ECO:0000266"/>
    <property type="project" value="RGD"/>
</dbReference>
<dbReference type="GO" id="GO:0006713">
    <property type="term" value="P:glucocorticoid catabolic process"/>
    <property type="evidence" value="ECO:0000266"/>
    <property type="project" value="RGD"/>
</dbReference>
<dbReference type="GO" id="GO:0006886">
    <property type="term" value="P:intracellular protein transport"/>
    <property type="evidence" value="ECO:0000266"/>
    <property type="project" value="RGD"/>
</dbReference>
<dbReference type="GO" id="GO:0086010">
    <property type="term" value="P:membrane depolarization during action potential"/>
    <property type="evidence" value="ECO:0000250"/>
    <property type="project" value="BHF-UCL"/>
</dbReference>
<dbReference type="GO" id="GO:0050774">
    <property type="term" value="P:negative regulation of dendrite morphogenesis"/>
    <property type="evidence" value="ECO:0000266"/>
    <property type="project" value="RGD"/>
</dbReference>
<dbReference type="GO" id="GO:0042921">
    <property type="term" value="P:nuclear receptor-mediated glucocorticoid signaling pathway"/>
    <property type="evidence" value="ECO:0000266"/>
    <property type="project" value="RGD"/>
</dbReference>
<dbReference type="GO" id="GO:0045893">
    <property type="term" value="P:positive regulation of DNA-templated transcription"/>
    <property type="evidence" value="ECO:0000266"/>
    <property type="project" value="RGD"/>
</dbReference>
<dbReference type="GO" id="GO:0099171">
    <property type="term" value="P:presynaptic modulation of chemical synaptic transmission"/>
    <property type="evidence" value="ECO:0000266"/>
    <property type="project" value="RGD"/>
</dbReference>
<dbReference type="GO" id="GO:0008104">
    <property type="term" value="P:protein localization"/>
    <property type="evidence" value="ECO:0000318"/>
    <property type="project" value="GO_Central"/>
</dbReference>
<dbReference type="GO" id="GO:0002028">
    <property type="term" value="P:regulation of sodium ion transport"/>
    <property type="evidence" value="ECO:0000250"/>
    <property type="project" value="BHF-UCL"/>
</dbReference>
<dbReference type="GO" id="GO:0007165">
    <property type="term" value="P:signal transduction"/>
    <property type="evidence" value="ECO:0000318"/>
    <property type="project" value="GO_Central"/>
</dbReference>
<dbReference type="CDD" id="cd10025">
    <property type="entry name" value="14-3-3_eta"/>
    <property type="match status" value="1"/>
</dbReference>
<dbReference type="FunFam" id="1.20.190.20:FF:000001">
    <property type="entry name" value="14-3-3 gamma 1"/>
    <property type="match status" value="1"/>
</dbReference>
<dbReference type="Gene3D" id="1.20.190.20">
    <property type="entry name" value="14-3-3 domain"/>
    <property type="match status" value="1"/>
</dbReference>
<dbReference type="InterPro" id="IPR000308">
    <property type="entry name" value="14-3-3"/>
</dbReference>
<dbReference type="InterPro" id="IPR023409">
    <property type="entry name" value="14-3-3_CS"/>
</dbReference>
<dbReference type="InterPro" id="IPR036815">
    <property type="entry name" value="14-3-3_dom_sf"/>
</dbReference>
<dbReference type="InterPro" id="IPR023410">
    <property type="entry name" value="14-3-3_domain"/>
</dbReference>
<dbReference type="PANTHER" id="PTHR18860">
    <property type="entry name" value="14-3-3 PROTEIN"/>
    <property type="match status" value="1"/>
</dbReference>
<dbReference type="Pfam" id="PF00244">
    <property type="entry name" value="14-3-3"/>
    <property type="match status" value="1"/>
</dbReference>
<dbReference type="PIRSF" id="PIRSF000868">
    <property type="entry name" value="14-3-3"/>
    <property type="match status" value="1"/>
</dbReference>
<dbReference type="PRINTS" id="PR00305">
    <property type="entry name" value="1433ZETA"/>
</dbReference>
<dbReference type="SMART" id="SM00101">
    <property type="entry name" value="14_3_3"/>
    <property type="match status" value="1"/>
</dbReference>
<dbReference type="SUPFAM" id="SSF48445">
    <property type="entry name" value="14-3-3 protein"/>
    <property type="match status" value="1"/>
</dbReference>
<dbReference type="PROSITE" id="PS00796">
    <property type="entry name" value="1433_1"/>
    <property type="match status" value="1"/>
</dbReference>
<dbReference type="PROSITE" id="PS00797">
    <property type="entry name" value="1433_2"/>
    <property type="match status" value="1"/>
</dbReference>
<evidence type="ECO:0000250" key="1"/>
<evidence type="ECO:0000250" key="2">
    <source>
        <dbReference type="UniProtKB" id="P68510"/>
    </source>
</evidence>
<evidence type="ECO:0000250" key="3">
    <source>
        <dbReference type="UniProtKB" id="Q04917"/>
    </source>
</evidence>
<evidence type="ECO:0000305" key="4"/>
<reference key="1">
    <citation type="journal article" date="1991" name="Brain Res. Mol. Brain Res.">
        <title>Molecular cloning of cDNA to rat 14-3-3 eta chain polypeptide and the neuronal expression of the mRNA in the central nervous system.</title>
        <authorList>
            <person name="Watanabe M."/>
            <person name="Isobe T."/>
            <person name="Okuyama T."/>
            <person name="Ichimura T."/>
            <person name="Kuwano R."/>
            <person name="Takahashi Y."/>
            <person name="Kondo H."/>
        </authorList>
    </citation>
    <scope>NUCLEOTIDE SEQUENCE [MRNA]</scope>
</reference>
<reference key="2">
    <citation type="journal article" date="2004" name="Genome Res.">
        <title>The status, quality, and expansion of the NIH full-length cDNA project: the Mammalian Gene Collection (MGC).</title>
        <authorList>
            <consortium name="The MGC Project Team"/>
        </authorList>
    </citation>
    <scope>NUCLEOTIDE SEQUENCE [LARGE SCALE MRNA]</scope>
    <source>
        <tissue>Heart</tissue>
    </source>
</reference>
<reference key="3">
    <citation type="submission" date="2009-01" db="UniProtKB">
        <authorList>
            <person name="Lubec G."/>
            <person name="Kang S.U."/>
            <person name="Chen W.-Q."/>
        </authorList>
    </citation>
    <scope>PROTEIN SEQUENCE OF 13-56; 62-69; 111-120; 126-132; 144-155; 163-172 AND 197-227</scope>
    <scope>IDENTIFICATION BY MASS SPECTROMETRY</scope>
    <source>
        <strain>Sprague-Dawley</strain>
        <tissue>Brain</tissue>
        <tissue>Hippocampus</tissue>
    </source>
</reference>
<feature type="initiator methionine" description="Removed" evidence="3">
    <location>
        <position position="1"/>
    </location>
</feature>
<feature type="chain" id="PRO_0000058625" description="14-3-3 protein eta">
    <location>
        <begin position="2"/>
        <end position="246"/>
    </location>
</feature>
<feature type="site" description="Interaction with phosphoserine on interacting protein" evidence="1">
    <location>
        <position position="57"/>
    </location>
</feature>
<feature type="site" description="Interaction with phosphoserine on interacting protein" evidence="1">
    <location>
        <position position="132"/>
    </location>
</feature>
<feature type="modified residue" description="N-acetylglycine" evidence="3">
    <location>
        <position position="2"/>
    </location>
</feature>
<feature type="modified residue" description="Phosphoserine" evidence="3">
    <location>
        <position position="25"/>
    </location>
</feature>
<feature type="modified residue" description="Phosphoserine" evidence="2">
    <location>
        <position position="59"/>
    </location>
</feature>
<accession>P68511</accession>
<accession>P11576</accession>
<accession>P70198</accession>
<protein>
    <recommendedName>
        <fullName>14-3-3 protein eta</fullName>
    </recommendedName>
</protein>